<reference key="1">
    <citation type="journal article" date="2004" name="Proc. Natl. Acad. Sci. U.S.A.">
        <title>Complete genomes of two clinical Staphylococcus aureus strains: evidence for the rapid evolution of virulence and drug resistance.</title>
        <authorList>
            <person name="Holden M.T.G."/>
            <person name="Feil E.J."/>
            <person name="Lindsay J.A."/>
            <person name="Peacock S.J."/>
            <person name="Day N.P.J."/>
            <person name="Enright M.C."/>
            <person name="Foster T.J."/>
            <person name="Moore C.E."/>
            <person name="Hurst L."/>
            <person name="Atkin R."/>
            <person name="Barron A."/>
            <person name="Bason N."/>
            <person name="Bentley S.D."/>
            <person name="Chillingworth C."/>
            <person name="Chillingworth T."/>
            <person name="Churcher C."/>
            <person name="Clark L."/>
            <person name="Corton C."/>
            <person name="Cronin A."/>
            <person name="Doggett J."/>
            <person name="Dowd L."/>
            <person name="Feltwell T."/>
            <person name="Hance Z."/>
            <person name="Harris B."/>
            <person name="Hauser H."/>
            <person name="Holroyd S."/>
            <person name="Jagels K."/>
            <person name="James K.D."/>
            <person name="Lennard N."/>
            <person name="Line A."/>
            <person name="Mayes R."/>
            <person name="Moule S."/>
            <person name="Mungall K."/>
            <person name="Ormond D."/>
            <person name="Quail M.A."/>
            <person name="Rabbinowitsch E."/>
            <person name="Rutherford K.M."/>
            <person name="Sanders M."/>
            <person name="Sharp S."/>
            <person name="Simmonds M."/>
            <person name="Stevens K."/>
            <person name="Whitehead S."/>
            <person name="Barrell B.G."/>
            <person name="Spratt B.G."/>
            <person name="Parkhill J."/>
        </authorList>
    </citation>
    <scope>NUCLEOTIDE SEQUENCE [LARGE SCALE GENOMIC DNA]</scope>
    <source>
        <strain>MRSA252</strain>
    </source>
</reference>
<feature type="chain" id="PRO_0000259975" description="Adenylosuccinate lyase">
    <location>
        <begin position="1"/>
        <end position="431"/>
    </location>
</feature>
<feature type="active site" description="Proton donor/acceptor" evidence="2">
    <location>
        <position position="141"/>
    </location>
</feature>
<feature type="active site" description="Proton donor/acceptor" evidence="2">
    <location>
        <position position="262"/>
    </location>
</feature>
<feature type="binding site" evidence="2">
    <location>
        <begin position="4"/>
        <end position="5"/>
    </location>
    <ligand>
        <name>N(6)-(1,2-dicarboxyethyl)-AMP</name>
        <dbReference type="ChEBI" id="CHEBI:57567"/>
    </ligand>
</feature>
<feature type="binding site" evidence="2">
    <location>
        <begin position="67"/>
        <end position="69"/>
    </location>
    <ligand>
        <name>N(6)-(1,2-dicarboxyethyl)-AMP</name>
        <dbReference type="ChEBI" id="CHEBI:57567"/>
    </ligand>
</feature>
<feature type="binding site" evidence="2">
    <location>
        <begin position="93"/>
        <end position="94"/>
    </location>
    <ligand>
        <name>N(6)-(1,2-dicarboxyethyl)-AMP</name>
        <dbReference type="ChEBI" id="CHEBI:57567"/>
    </ligand>
</feature>
<feature type="binding site" evidence="2">
    <location>
        <position position="212"/>
    </location>
    <ligand>
        <name>N(6)-(1,2-dicarboxyethyl)-AMP</name>
        <dbReference type="ChEBI" id="CHEBI:57567"/>
    </ligand>
</feature>
<feature type="binding site" evidence="2">
    <location>
        <position position="263"/>
    </location>
    <ligand>
        <name>N(6)-(1,2-dicarboxyethyl)-AMP</name>
        <dbReference type="ChEBI" id="CHEBI:57567"/>
    </ligand>
</feature>
<feature type="binding site" evidence="2">
    <location>
        <begin position="268"/>
        <end position="270"/>
    </location>
    <ligand>
        <name>N(6)-(1,2-dicarboxyethyl)-AMP</name>
        <dbReference type="ChEBI" id="CHEBI:57567"/>
    </ligand>
</feature>
<feature type="binding site" evidence="2">
    <location>
        <position position="276"/>
    </location>
    <ligand>
        <name>N(6)-(1,2-dicarboxyethyl)-AMP</name>
        <dbReference type="ChEBI" id="CHEBI:57567"/>
    </ligand>
</feature>
<feature type="binding site" evidence="2">
    <location>
        <begin position="307"/>
        <end position="311"/>
    </location>
    <ligand>
        <name>N(6)-(1,2-dicarboxyethyl)-AMP</name>
        <dbReference type="ChEBI" id="CHEBI:57567"/>
    </ligand>
</feature>
<keyword id="KW-0456">Lyase</keyword>
<keyword id="KW-0658">Purine biosynthesis</keyword>
<name>PUR8_STAAR</name>
<accession>Q6GFE9</accession>
<protein>
    <recommendedName>
        <fullName>Adenylosuccinate lyase</fullName>
        <shortName>ASL</shortName>
        <ecNumber evidence="2">4.3.2.2</ecNumber>
    </recommendedName>
    <alternativeName>
        <fullName>Adenylosuccinase</fullName>
        <shortName>ASase</shortName>
    </alternativeName>
</protein>
<organism>
    <name type="scientific">Staphylococcus aureus (strain MRSA252)</name>
    <dbReference type="NCBI Taxonomy" id="282458"/>
    <lineage>
        <taxon>Bacteria</taxon>
        <taxon>Bacillati</taxon>
        <taxon>Bacillota</taxon>
        <taxon>Bacilli</taxon>
        <taxon>Bacillales</taxon>
        <taxon>Staphylococcaceae</taxon>
        <taxon>Staphylococcus</taxon>
    </lineage>
</organism>
<dbReference type="EC" id="4.3.2.2" evidence="2"/>
<dbReference type="EMBL" id="BX571856">
    <property type="protein sequence ID" value="CAG40985.1"/>
    <property type="molecule type" value="Genomic_DNA"/>
</dbReference>
<dbReference type="RefSeq" id="WP_000572878.1">
    <property type="nucleotide sequence ID" value="NC_002952.2"/>
</dbReference>
<dbReference type="SMR" id="Q6GFE9"/>
<dbReference type="KEGG" id="sar:SAR2000"/>
<dbReference type="HOGENOM" id="CLU_030949_0_1_9"/>
<dbReference type="UniPathway" id="UPA00074">
    <property type="reaction ID" value="UER00132"/>
</dbReference>
<dbReference type="UniPathway" id="UPA00075">
    <property type="reaction ID" value="UER00336"/>
</dbReference>
<dbReference type="Proteomes" id="UP000000596">
    <property type="component" value="Chromosome"/>
</dbReference>
<dbReference type="GO" id="GO:0005829">
    <property type="term" value="C:cytosol"/>
    <property type="evidence" value="ECO:0007669"/>
    <property type="project" value="TreeGrafter"/>
</dbReference>
<dbReference type="GO" id="GO:0070626">
    <property type="term" value="F:(S)-2-(5-amino-1-(5-phospho-D-ribosyl)imidazole-4-carboxamido) succinate lyase (fumarate-forming) activity"/>
    <property type="evidence" value="ECO:0007669"/>
    <property type="project" value="TreeGrafter"/>
</dbReference>
<dbReference type="GO" id="GO:0004018">
    <property type="term" value="F:N6-(1,2-dicarboxyethyl)AMP AMP-lyase (fumarate-forming) activity"/>
    <property type="evidence" value="ECO:0007669"/>
    <property type="project" value="InterPro"/>
</dbReference>
<dbReference type="GO" id="GO:0044208">
    <property type="term" value="P:'de novo' AMP biosynthetic process"/>
    <property type="evidence" value="ECO:0007669"/>
    <property type="project" value="UniProtKB-UniPathway"/>
</dbReference>
<dbReference type="GO" id="GO:0006189">
    <property type="term" value="P:'de novo' IMP biosynthetic process"/>
    <property type="evidence" value="ECO:0007669"/>
    <property type="project" value="UniProtKB-UniPathway"/>
</dbReference>
<dbReference type="CDD" id="cd01360">
    <property type="entry name" value="Adenylsuccinate_lyase_1"/>
    <property type="match status" value="1"/>
</dbReference>
<dbReference type="FunFam" id="1.10.275.10:FF:000006">
    <property type="entry name" value="Adenylosuccinate lyase"/>
    <property type="match status" value="1"/>
</dbReference>
<dbReference type="FunFam" id="1.10.40.30:FF:000007">
    <property type="entry name" value="Adenylosuccinate lyase"/>
    <property type="match status" value="1"/>
</dbReference>
<dbReference type="FunFam" id="1.20.200.10:FF:000008">
    <property type="entry name" value="Adenylosuccinate lyase"/>
    <property type="match status" value="1"/>
</dbReference>
<dbReference type="Gene3D" id="1.10.40.30">
    <property type="entry name" value="Fumarase/aspartase (C-terminal domain)"/>
    <property type="match status" value="1"/>
</dbReference>
<dbReference type="Gene3D" id="1.20.200.10">
    <property type="entry name" value="Fumarase/aspartase (Central domain)"/>
    <property type="match status" value="1"/>
</dbReference>
<dbReference type="Gene3D" id="1.10.275.10">
    <property type="entry name" value="Fumarase/aspartase (N-terminal domain)"/>
    <property type="match status" value="1"/>
</dbReference>
<dbReference type="InterPro" id="IPR019468">
    <property type="entry name" value="AdenyloSucc_lyase_C"/>
</dbReference>
<dbReference type="InterPro" id="IPR024083">
    <property type="entry name" value="Fumarase/histidase_N"/>
</dbReference>
<dbReference type="InterPro" id="IPR020557">
    <property type="entry name" value="Fumarate_lyase_CS"/>
</dbReference>
<dbReference type="InterPro" id="IPR000362">
    <property type="entry name" value="Fumarate_lyase_fam"/>
</dbReference>
<dbReference type="InterPro" id="IPR022761">
    <property type="entry name" value="Fumarate_lyase_N"/>
</dbReference>
<dbReference type="InterPro" id="IPR008948">
    <property type="entry name" value="L-Aspartase-like"/>
</dbReference>
<dbReference type="InterPro" id="IPR004769">
    <property type="entry name" value="Pur_lyase"/>
</dbReference>
<dbReference type="NCBIfam" id="TIGR00928">
    <property type="entry name" value="purB"/>
    <property type="match status" value="1"/>
</dbReference>
<dbReference type="PANTHER" id="PTHR43172">
    <property type="entry name" value="ADENYLOSUCCINATE LYASE"/>
    <property type="match status" value="1"/>
</dbReference>
<dbReference type="PANTHER" id="PTHR43172:SF1">
    <property type="entry name" value="ADENYLOSUCCINATE LYASE"/>
    <property type="match status" value="1"/>
</dbReference>
<dbReference type="Pfam" id="PF10397">
    <property type="entry name" value="ADSL_C"/>
    <property type="match status" value="1"/>
</dbReference>
<dbReference type="Pfam" id="PF00206">
    <property type="entry name" value="Lyase_1"/>
    <property type="match status" value="1"/>
</dbReference>
<dbReference type="PRINTS" id="PR00145">
    <property type="entry name" value="ARGSUCLYASE"/>
</dbReference>
<dbReference type="PRINTS" id="PR00149">
    <property type="entry name" value="FUMRATELYASE"/>
</dbReference>
<dbReference type="SMART" id="SM00998">
    <property type="entry name" value="ADSL_C"/>
    <property type="match status" value="1"/>
</dbReference>
<dbReference type="SUPFAM" id="SSF48557">
    <property type="entry name" value="L-aspartase-like"/>
    <property type="match status" value="1"/>
</dbReference>
<dbReference type="PROSITE" id="PS00163">
    <property type="entry name" value="FUMARATE_LYASES"/>
    <property type="match status" value="1"/>
</dbReference>
<sequence length="431" mass="49603">MIERYSREEMSNIWTDQNRYEAWLEVEILACEAWSELGHIPKADVQKIRQNAKVNVERAQEIEQETRHDVVAFTRQVSETLGEERKWVHYGLTSTDVVDTALSFVIKQANDIIEKDLERFIDVLAEKAKNYKYTLMMGRTHGVHAEPTTFGVKMALWYTEMQRNLQRFKQVREEIEVGKMSGAVGTFANIPPEIESYVCKHLGIGTAPVSTQTLQRDRHAYYIATLALIATSLEKFAVEIRNLQKTETREVEEAFAKGQKGSSAMPHKRNPIGSENITGISRVIRGYITTAYENVPLWHERDISHSSAERIMLPDVTIALDYALNRFTNIVDRLTVFEDNMRNNIDKTFGLIFSQRVLLALINKGMVREEAYDKVQPKAMISWETKTPFRELIEQDESITSVLTKEELDECFDPKHHLNQVDTIFERAGLA</sequence>
<evidence type="ECO:0000250" key="1"/>
<evidence type="ECO:0000250" key="2">
    <source>
        <dbReference type="UniProtKB" id="P0AB89"/>
    </source>
</evidence>
<evidence type="ECO:0000305" key="3"/>
<comment type="function">
    <text evidence="2">Catalyzes two reactions in de novo purine nucleotide biosynthesis. Catalyzes the breakdown of 5-aminoimidazole- (N-succinylocarboxamide) ribotide (SAICAR or 2-[5-amino-1-(5-phospho-beta-D-ribosyl)imidazole-4-carboxamido]succinate) to 5-aminoimidazole-4-carboxamide ribotide (AICAR or 5-amino-1-(5-phospho-beta-D-ribosyl)imidazole-4-carboxamide) and fumarate, and of adenylosuccinate (ADS or N(6)-(1,2-dicarboxyethyl)-AMP) to adenosine monophosphate (AMP) and fumarate.</text>
</comment>
<comment type="catalytic activity">
    <reaction evidence="2">
        <text>N(6)-(1,2-dicarboxyethyl)-AMP = fumarate + AMP</text>
        <dbReference type="Rhea" id="RHEA:16853"/>
        <dbReference type="ChEBI" id="CHEBI:29806"/>
        <dbReference type="ChEBI" id="CHEBI:57567"/>
        <dbReference type="ChEBI" id="CHEBI:456215"/>
        <dbReference type="EC" id="4.3.2.2"/>
    </reaction>
    <physiologicalReaction direction="left-to-right" evidence="2">
        <dbReference type="Rhea" id="RHEA:16854"/>
    </physiologicalReaction>
</comment>
<comment type="catalytic activity">
    <reaction evidence="2">
        <text>(2S)-2-[5-amino-1-(5-phospho-beta-D-ribosyl)imidazole-4-carboxamido]succinate = 5-amino-1-(5-phospho-beta-D-ribosyl)imidazole-4-carboxamide + fumarate</text>
        <dbReference type="Rhea" id="RHEA:23920"/>
        <dbReference type="ChEBI" id="CHEBI:29806"/>
        <dbReference type="ChEBI" id="CHEBI:58443"/>
        <dbReference type="ChEBI" id="CHEBI:58475"/>
        <dbReference type="EC" id="4.3.2.2"/>
    </reaction>
    <physiologicalReaction direction="left-to-right" evidence="2">
        <dbReference type="Rhea" id="RHEA:23921"/>
    </physiologicalReaction>
</comment>
<comment type="pathway">
    <text>Purine metabolism; AMP biosynthesis via de novo pathway; AMP from IMP: step 2/2.</text>
</comment>
<comment type="pathway">
    <text>Purine metabolism; IMP biosynthesis via de novo pathway; 5-amino-1-(5-phospho-D-ribosyl)imidazole-4-carboxamide from 5-amino-1-(5-phospho-D-ribosyl)imidazole-4-carboxylate: step 2/2.</text>
</comment>
<comment type="subunit">
    <text evidence="1">Homodimer and homotetramer. Residues from neighboring subunits contribute catalytic and substrate-binding residues to each active site (By similarity).</text>
</comment>
<comment type="similarity">
    <text evidence="3">Belongs to the lyase 1 family. Adenylosuccinate lyase subfamily.</text>
</comment>
<proteinExistence type="inferred from homology"/>
<gene>
    <name type="primary">purB</name>
    <name type="ordered locus">SAR2000</name>
</gene>